<protein>
    <recommendedName>
        <fullName evidence="1">UDP-N-acetylmuramoylalanine--D-glutamate ligase</fullName>
        <ecNumber evidence="1">6.3.2.9</ecNumber>
    </recommendedName>
    <alternativeName>
        <fullName evidence="1">D-glutamic acid-adding enzyme</fullName>
    </alternativeName>
    <alternativeName>
        <fullName evidence="1">UDP-N-acetylmuramoyl-L-alanyl-D-glutamate synthetase</fullName>
    </alternativeName>
</protein>
<accession>A4IZG9</accession>
<sequence length="416" mass="46735">MFSFYFNDNKITKLLMVGYGSTGKSVCDFLANFIDITVDISQNDDEFVNYDLNSYDLITVSPGIPLNKSPYRALTKFKDKIVSDIDIFYQYIKDTKAKTIAVTGSNGKSTVVTMTDFVLKDLGYKSILVGNIGTPALNKIGEKFDYCVVEVSSFQINLFNCVRFDLGCIINVSPDHLDRYQNFEQYKQSKLNLAKFSNDFFVYDVHNGIKYAGEYQIIRGAIYRNSTKLLDIVETKLFGEHNLENIIVVLNILDRLGLDINQAIASIKKFKGLEHRCKIVKKVNGTTYINDSKGTNVGATIAALNSITNSKNIILLLGGVAKGGDFSLMIKSLDKYVKYVYIYGADKEYIESYIKGYCKYQLCNNMKQAFELASQKANSNEIVLLSPACASFDEFSGYAQRGEVFQNLVAQLEQKS</sequence>
<keyword id="KW-0067">ATP-binding</keyword>
<keyword id="KW-0131">Cell cycle</keyword>
<keyword id="KW-0132">Cell division</keyword>
<keyword id="KW-0133">Cell shape</keyword>
<keyword id="KW-0961">Cell wall biogenesis/degradation</keyword>
<keyword id="KW-0963">Cytoplasm</keyword>
<keyword id="KW-0436">Ligase</keyword>
<keyword id="KW-0547">Nucleotide-binding</keyword>
<keyword id="KW-0573">Peptidoglycan synthesis</keyword>
<reference key="1">
    <citation type="journal article" date="2007" name="PLoS ONE">
        <title>Complete genomic characterization of a pathogenic A.II strain of Francisella tularensis subspecies tularensis.</title>
        <authorList>
            <person name="Beckstrom-Sternberg S.M."/>
            <person name="Auerbach R.K."/>
            <person name="Godbole S."/>
            <person name="Pearson J.V."/>
            <person name="Beckstrom-Sternberg J.S."/>
            <person name="Deng Z."/>
            <person name="Munk C."/>
            <person name="Kubota K."/>
            <person name="Zhou Y."/>
            <person name="Bruce D."/>
            <person name="Noronha J."/>
            <person name="Scheuermann R.H."/>
            <person name="Wang A."/>
            <person name="Wei X."/>
            <person name="Wang J."/>
            <person name="Hao J."/>
            <person name="Wagner D.M."/>
            <person name="Brettin T.S."/>
            <person name="Brown N."/>
            <person name="Gilna P."/>
            <person name="Keim P.S."/>
        </authorList>
    </citation>
    <scope>NUCLEOTIDE SEQUENCE [LARGE SCALE GENOMIC DNA]</scope>
    <source>
        <strain>WY96-3418</strain>
    </source>
</reference>
<dbReference type="EC" id="6.3.2.9" evidence="1"/>
<dbReference type="EMBL" id="CP000608">
    <property type="protein sequence ID" value="ABO47319.1"/>
    <property type="molecule type" value="Genomic_DNA"/>
</dbReference>
<dbReference type="RefSeq" id="WP_003026954.1">
    <property type="nucleotide sequence ID" value="NC_009257.1"/>
</dbReference>
<dbReference type="SMR" id="A4IZG9"/>
<dbReference type="KEGG" id="ftw:FTW_1619"/>
<dbReference type="HOGENOM" id="CLU_032540_1_0_6"/>
<dbReference type="UniPathway" id="UPA00219"/>
<dbReference type="GO" id="GO:0005737">
    <property type="term" value="C:cytoplasm"/>
    <property type="evidence" value="ECO:0007669"/>
    <property type="project" value="UniProtKB-SubCell"/>
</dbReference>
<dbReference type="GO" id="GO:0005524">
    <property type="term" value="F:ATP binding"/>
    <property type="evidence" value="ECO:0007669"/>
    <property type="project" value="UniProtKB-UniRule"/>
</dbReference>
<dbReference type="GO" id="GO:0008764">
    <property type="term" value="F:UDP-N-acetylmuramoylalanine-D-glutamate ligase activity"/>
    <property type="evidence" value="ECO:0007669"/>
    <property type="project" value="UniProtKB-UniRule"/>
</dbReference>
<dbReference type="GO" id="GO:0051301">
    <property type="term" value="P:cell division"/>
    <property type="evidence" value="ECO:0007669"/>
    <property type="project" value="UniProtKB-KW"/>
</dbReference>
<dbReference type="GO" id="GO:0071555">
    <property type="term" value="P:cell wall organization"/>
    <property type="evidence" value="ECO:0007669"/>
    <property type="project" value="UniProtKB-KW"/>
</dbReference>
<dbReference type="GO" id="GO:0009252">
    <property type="term" value="P:peptidoglycan biosynthetic process"/>
    <property type="evidence" value="ECO:0007669"/>
    <property type="project" value="UniProtKB-UniRule"/>
</dbReference>
<dbReference type="GO" id="GO:0008360">
    <property type="term" value="P:regulation of cell shape"/>
    <property type="evidence" value="ECO:0007669"/>
    <property type="project" value="UniProtKB-KW"/>
</dbReference>
<dbReference type="Gene3D" id="3.90.190.20">
    <property type="entry name" value="Mur ligase, C-terminal domain"/>
    <property type="match status" value="1"/>
</dbReference>
<dbReference type="Gene3D" id="3.40.1190.10">
    <property type="entry name" value="Mur-like, catalytic domain"/>
    <property type="match status" value="1"/>
</dbReference>
<dbReference type="HAMAP" id="MF_00639">
    <property type="entry name" value="MurD"/>
    <property type="match status" value="1"/>
</dbReference>
<dbReference type="InterPro" id="IPR036565">
    <property type="entry name" value="Mur-like_cat_sf"/>
</dbReference>
<dbReference type="InterPro" id="IPR004101">
    <property type="entry name" value="Mur_ligase_C"/>
</dbReference>
<dbReference type="InterPro" id="IPR036615">
    <property type="entry name" value="Mur_ligase_C_dom_sf"/>
</dbReference>
<dbReference type="InterPro" id="IPR013221">
    <property type="entry name" value="Mur_ligase_cen"/>
</dbReference>
<dbReference type="InterPro" id="IPR005762">
    <property type="entry name" value="MurD"/>
</dbReference>
<dbReference type="NCBIfam" id="TIGR01087">
    <property type="entry name" value="murD"/>
    <property type="match status" value="1"/>
</dbReference>
<dbReference type="PANTHER" id="PTHR43692">
    <property type="entry name" value="UDP-N-ACETYLMURAMOYLALANINE--D-GLUTAMATE LIGASE"/>
    <property type="match status" value="1"/>
</dbReference>
<dbReference type="PANTHER" id="PTHR43692:SF1">
    <property type="entry name" value="UDP-N-ACETYLMURAMOYLALANINE--D-GLUTAMATE LIGASE"/>
    <property type="match status" value="1"/>
</dbReference>
<dbReference type="Pfam" id="PF02875">
    <property type="entry name" value="Mur_ligase_C"/>
    <property type="match status" value="1"/>
</dbReference>
<dbReference type="Pfam" id="PF08245">
    <property type="entry name" value="Mur_ligase_M"/>
    <property type="match status" value="1"/>
</dbReference>
<dbReference type="SUPFAM" id="SSF53623">
    <property type="entry name" value="MurD-like peptide ligases, catalytic domain"/>
    <property type="match status" value="1"/>
</dbReference>
<dbReference type="SUPFAM" id="SSF53244">
    <property type="entry name" value="MurD-like peptide ligases, peptide-binding domain"/>
    <property type="match status" value="1"/>
</dbReference>
<evidence type="ECO:0000255" key="1">
    <source>
        <dbReference type="HAMAP-Rule" id="MF_00639"/>
    </source>
</evidence>
<comment type="function">
    <text evidence="1">Cell wall formation. Catalyzes the addition of glutamate to the nucleotide precursor UDP-N-acetylmuramoyl-L-alanine (UMA).</text>
</comment>
<comment type="catalytic activity">
    <reaction evidence="1">
        <text>UDP-N-acetyl-alpha-D-muramoyl-L-alanine + D-glutamate + ATP = UDP-N-acetyl-alpha-D-muramoyl-L-alanyl-D-glutamate + ADP + phosphate + H(+)</text>
        <dbReference type="Rhea" id="RHEA:16429"/>
        <dbReference type="ChEBI" id="CHEBI:15378"/>
        <dbReference type="ChEBI" id="CHEBI:29986"/>
        <dbReference type="ChEBI" id="CHEBI:30616"/>
        <dbReference type="ChEBI" id="CHEBI:43474"/>
        <dbReference type="ChEBI" id="CHEBI:83898"/>
        <dbReference type="ChEBI" id="CHEBI:83900"/>
        <dbReference type="ChEBI" id="CHEBI:456216"/>
        <dbReference type="EC" id="6.3.2.9"/>
    </reaction>
</comment>
<comment type="pathway">
    <text evidence="1">Cell wall biogenesis; peptidoglycan biosynthesis.</text>
</comment>
<comment type="subcellular location">
    <subcellularLocation>
        <location evidence="1">Cytoplasm</location>
    </subcellularLocation>
</comment>
<comment type="similarity">
    <text evidence="1">Belongs to the MurCDEF family.</text>
</comment>
<organism>
    <name type="scientific">Francisella tularensis subsp. tularensis (strain WY96-3418)</name>
    <dbReference type="NCBI Taxonomy" id="418136"/>
    <lineage>
        <taxon>Bacteria</taxon>
        <taxon>Pseudomonadati</taxon>
        <taxon>Pseudomonadota</taxon>
        <taxon>Gammaproteobacteria</taxon>
        <taxon>Thiotrichales</taxon>
        <taxon>Francisellaceae</taxon>
        <taxon>Francisella</taxon>
    </lineage>
</organism>
<feature type="chain" id="PRO_0000301427" description="UDP-N-acetylmuramoylalanine--D-glutamate ligase">
    <location>
        <begin position="1"/>
        <end position="416"/>
    </location>
</feature>
<feature type="binding site" evidence="1">
    <location>
        <begin position="104"/>
        <end position="110"/>
    </location>
    <ligand>
        <name>ATP</name>
        <dbReference type="ChEBI" id="CHEBI:30616"/>
    </ligand>
</feature>
<proteinExistence type="inferred from homology"/>
<gene>
    <name evidence="1" type="primary">murD</name>
    <name type="ordered locus">FTW_1619</name>
</gene>
<name>MURD_FRATW</name>